<comment type="function">
    <text evidence="1">Participates in the translocation of lipoproteins from the inner membrane to the outer membrane. Only forms a complex with a lipoprotein if the residue after the N-terminal Cys is not an aspartate (The Asp acts as a targeting signal to indicate that the lipoprotein should stay in the inner membrane).</text>
</comment>
<comment type="subunit">
    <text evidence="1">Monomer.</text>
</comment>
<comment type="subcellular location">
    <subcellularLocation>
        <location evidence="1">Periplasm</location>
    </subcellularLocation>
</comment>
<comment type="similarity">
    <text evidence="1">Belongs to the LolA family.</text>
</comment>
<protein>
    <recommendedName>
        <fullName evidence="1">Outer-membrane lipoprotein carrier protein</fullName>
    </recommendedName>
</protein>
<accession>C4ZQ17</accession>
<proteinExistence type="inferred from homology"/>
<organism>
    <name type="scientific">Escherichia coli (strain K12 / MC4100 / BW2952)</name>
    <dbReference type="NCBI Taxonomy" id="595496"/>
    <lineage>
        <taxon>Bacteria</taxon>
        <taxon>Pseudomonadati</taxon>
        <taxon>Pseudomonadota</taxon>
        <taxon>Gammaproteobacteria</taxon>
        <taxon>Enterobacterales</taxon>
        <taxon>Enterobacteriaceae</taxon>
        <taxon>Escherichia</taxon>
    </lineage>
</organism>
<sequence>MKKIAITCALLSSLVASSVWADAASDLKSRLDKVSSFHASFTQKVTDGSGAAVQEGQGDLWVKRPNLFNWHMTQPDESILVSDGKTLWFYNPFVEQATATWLKDATGNTPFMLIARNQSSDWQQYNIKQNGDDFVLTPKASNGNLKQFTINVGRDGTIHQFSAVEQDDQRSSYQLKSQQNGAVDAAKFTFTPPQGVTVDDQRK</sequence>
<gene>
    <name evidence="1" type="primary">lolA</name>
    <name type="ordered locus">BWG_0743</name>
</gene>
<feature type="signal peptide" evidence="1">
    <location>
        <begin position="1"/>
        <end position="21"/>
    </location>
</feature>
<feature type="chain" id="PRO_1000204467" description="Outer-membrane lipoprotein carrier protein">
    <location>
        <begin position="22"/>
        <end position="203"/>
    </location>
</feature>
<dbReference type="EMBL" id="CP001396">
    <property type="protein sequence ID" value="ACR62135.1"/>
    <property type="molecule type" value="Genomic_DNA"/>
</dbReference>
<dbReference type="RefSeq" id="WP_001295343.1">
    <property type="nucleotide sequence ID" value="NC_012759.1"/>
</dbReference>
<dbReference type="SMR" id="C4ZQ17"/>
<dbReference type="GeneID" id="93776529"/>
<dbReference type="KEGG" id="ebw:BWG_0743"/>
<dbReference type="HOGENOM" id="CLU_087560_1_1_6"/>
<dbReference type="GO" id="GO:0030288">
    <property type="term" value="C:outer membrane-bounded periplasmic space"/>
    <property type="evidence" value="ECO:0007669"/>
    <property type="project" value="TreeGrafter"/>
</dbReference>
<dbReference type="GO" id="GO:0044874">
    <property type="term" value="P:lipoprotein localization to outer membrane"/>
    <property type="evidence" value="ECO:0007669"/>
    <property type="project" value="UniProtKB-UniRule"/>
</dbReference>
<dbReference type="GO" id="GO:0042953">
    <property type="term" value="P:lipoprotein transport"/>
    <property type="evidence" value="ECO:0007669"/>
    <property type="project" value="InterPro"/>
</dbReference>
<dbReference type="CDD" id="cd16325">
    <property type="entry name" value="LolA"/>
    <property type="match status" value="1"/>
</dbReference>
<dbReference type="FunFam" id="2.50.20.10:FF:000001">
    <property type="entry name" value="Outer-membrane lipoprotein carrier protein"/>
    <property type="match status" value="1"/>
</dbReference>
<dbReference type="Gene3D" id="2.50.20.10">
    <property type="entry name" value="Lipoprotein localisation LolA/LolB/LppX"/>
    <property type="match status" value="1"/>
</dbReference>
<dbReference type="HAMAP" id="MF_00240">
    <property type="entry name" value="LolA"/>
    <property type="match status" value="1"/>
</dbReference>
<dbReference type="InterPro" id="IPR029046">
    <property type="entry name" value="LolA/LolB/LppX"/>
</dbReference>
<dbReference type="InterPro" id="IPR004564">
    <property type="entry name" value="OM_lipoprot_carrier_LolA-like"/>
</dbReference>
<dbReference type="InterPro" id="IPR018323">
    <property type="entry name" value="OM_lipoprot_carrier_LolA_Pbac"/>
</dbReference>
<dbReference type="NCBIfam" id="TIGR00547">
    <property type="entry name" value="lolA"/>
    <property type="match status" value="1"/>
</dbReference>
<dbReference type="PANTHER" id="PTHR35869">
    <property type="entry name" value="OUTER-MEMBRANE LIPOPROTEIN CARRIER PROTEIN"/>
    <property type="match status" value="1"/>
</dbReference>
<dbReference type="PANTHER" id="PTHR35869:SF1">
    <property type="entry name" value="OUTER-MEMBRANE LIPOPROTEIN CARRIER PROTEIN"/>
    <property type="match status" value="1"/>
</dbReference>
<dbReference type="Pfam" id="PF03548">
    <property type="entry name" value="LolA"/>
    <property type="match status" value="1"/>
</dbReference>
<dbReference type="SUPFAM" id="SSF89392">
    <property type="entry name" value="Prokaryotic lipoproteins and lipoprotein localization factors"/>
    <property type="match status" value="1"/>
</dbReference>
<name>LOLA_ECOBW</name>
<reference key="1">
    <citation type="journal article" date="2009" name="J. Bacteriol.">
        <title>Genomic sequencing reveals regulatory mutations and recombinational events in the widely used MC4100 lineage of Escherichia coli K-12.</title>
        <authorList>
            <person name="Ferenci T."/>
            <person name="Zhou Z."/>
            <person name="Betteridge T."/>
            <person name="Ren Y."/>
            <person name="Liu Y."/>
            <person name="Feng L."/>
            <person name="Reeves P.R."/>
            <person name="Wang L."/>
        </authorList>
    </citation>
    <scope>NUCLEOTIDE SEQUENCE [LARGE SCALE GENOMIC DNA]</scope>
    <source>
        <strain>K12 / MC4100 / BW2952</strain>
    </source>
</reference>
<evidence type="ECO:0000255" key="1">
    <source>
        <dbReference type="HAMAP-Rule" id="MF_00240"/>
    </source>
</evidence>
<keyword id="KW-0143">Chaperone</keyword>
<keyword id="KW-0574">Periplasm</keyword>
<keyword id="KW-0653">Protein transport</keyword>
<keyword id="KW-0732">Signal</keyword>
<keyword id="KW-0813">Transport</keyword>